<proteinExistence type="predicted"/>
<dbReference type="EMBL" id="U51921">
    <property type="status" value="NOT_ANNOTATED_CDS"/>
    <property type="molecule type" value="Genomic_DNA"/>
</dbReference>
<dbReference type="EMBL" id="BK006945">
    <property type="protein sequence ID" value="DAA09468.1"/>
    <property type="molecule type" value="Genomic_DNA"/>
</dbReference>
<dbReference type="RefSeq" id="NP_878122.1">
    <property type="nucleotide sequence ID" value="NM_001184561.1"/>
</dbReference>
<dbReference type="RefSeq" id="NP_878123.1">
    <property type="nucleotide sequence ID" value="NM_001184563.1"/>
</dbReference>
<dbReference type="RefSeq" id="NP_878126.1">
    <property type="nucleotide sequence ID" value="NM_001184564.1"/>
</dbReference>
<dbReference type="RefSeq" id="NP_878127.1">
    <property type="nucleotide sequence ID" value="NM_001184565.1"/>
</dbReference>
<dbReference type="BioGRID" id="36952">
    <property type="interactions" value="128"/>
</dbReference>
<dbReference type="BioGRID" id="36953">
    <property type="interactions" value="62"/>
</dbReference>
<dbReference type="BioGRID" id="36957">
    <property type="interactions" value="27"/>
</dbReference>
<dbReference type="FunCoup" id="P0CY04">
    <property type="interactions" value="34"/>
</dbReference>
<dbReference type="STRING" id="4932.YLR154C-H"/>
<dbReference type="PaxDb" id="4932-YLR154C-H"/>
<dbReference type="EnsemblFungi" id="YLR154C-H_mRNA">
    <property type="protein sequence ID" value="YLR154C-H"/>
    <property type="gene ID" value="YLR154C-H"/>
</dbReference>
<dbReference type="EnsemblFungi" id="YLR156C-A_mRNA">
    <property type="protein sequence ID" value="YLR156C-A"/>
    <property type="gene ID" value="YLR156C-A"/>
</dbReference>
<dbReference type="EnsemblFungi" id="YLR157C-C_mRNA">
    <property type="protein sequence ID" value="YLR157C-C"/>
    <property type="gene ID" value="YLR157C-C"/>
</dbReference>
<dbReference type="EnsemblFungi" id="YLR159C-A_mRNA">
    <property type="protein sequence ID" value="YLR159C-A"/>
    <property type="gene ID" value="YLR159C-A"/>
</dbReference>
<dbReference type="GeneID" id="1466414"/>
<dbReference type="KEGG" id="sce:YLR154C-H"/>
<dbReference type="KEGG" id="sce:YLR156C-A"/>
<dbReference type="KEGG" id="sce:YLR157C-C"/>
<dbReference type="KEGG" id="sce:YLR159C-A"/>
<dbReference type="AGR" id="SGD:S000028565"/>
<dbReference type="SGD" id="S000028565">
    <property type="gene designation" value="YLR157C-C"/>
</dbReference>
<dbReference type="VEuPathDB" id="FungiDB:YLR154C-H"/>
<dbReference type="VEuPathDB" id="FungiDB:YLR156C-A"/>
<dbReference type="VEuPathDB" id="FungiDB:YLR157C-C"/>
<dbReference type="VEuPathDB" id="FungiDB:YLR159C-A"/>
<dbReference type="eggNOG" id="ENOG502SZ9G">
    <property type="taxonomic scope" value="Eukaryota"/>
</dbReference>
<dbReference type="HOGENOM" id="CLU_3242482_0_0_1"/>
<dbReference type="InParanoid" id="P0CY04"/>
<dbReference type="OrthoDB" id="4088270at2759"/>
<dbReference type="BioCyc" id="YEAST:G3O-32578-MONOMER"/>
<dbReference type="PRO" id="PR:P0CY04"/>
<dbReference type="Proteomes" id="UP000002311">
    <property type="component" value="Chromosome XII"/>
</dbReference>
<protein>
    <recommendedName>
        <fullName>Uncharacterized protein YLR157C-C</fullName>
    </recommendedName>
</protein>
<sequence length="43" mass="4707">MYSCAKKKTTAAPEFRVWSPTTLLGQALTSLTTVDRTGNGAFW</sequence>
<reference key="1">
    <citation type="journal article" date="1997" name="Nature">
        <title>The nucleotide sequence of Saccharomyces cerevisiae chromosome XII.</title>
        <authorList>
            <person name="Johnston M."/>
            <person name="Hillier L.W."/>
            <person name="Riles L."/>
            <person name="Albermann K."/>
            <person name="Andre B."/>
            <person name="Ansorge W."/>
            <person name="Benes V."/>
            <person name="Brueckner M."/>
            <person name="Delius H."/>
            <person name="Dubois E."/>
            <person name="Duesterhoeft A."/>
            <person name="Entian K.-D."/>
            <person name="Floeth M."/>
            <person name="Goffeau A."/>
            <person name="Hebling U."/>
            <person name="Heumann K."/>
            <person name="Heuss-Neitzel D."/>
            <person name="Hilbert H."/>
            <person name="Hilger F."/>
            <person name="Kleine K."/>
            <person name="Koetter P."/>
            <person name="Louis E.J."/>
            <person name="Messenguy F."/>
            <person name="Mewes H.-W."/>
            <person name="Miosga T."/>
            <person name="Moestl D."/>
            <person name="Mueller-Auer S."/>
            <person name="Nentwich U."/>
            <person name="Obermaier B."/>
            <person name="Piravandi E."/>
            <person name="Pohl T.M."/>
            <person name="Portetelle D."/>
            <person name="Purnelle B."/>
            <person name="Rechmann S."/>
            <person name="Rieger M."/>
            <person name="Rinke M."/>
            <person name="Rose M."/>
            <person name="Scharfe M."/>
            <person name="Scherens B."/>
            <person name="Scholler P."/>
            <person name="Schwager C."/>
            <person name="Schwarz S."/>
            <person name="Underwood A.P."/>
            <person name="Urrestarazu L.A."/>
            <person name="Vandenbol M."/>
            <person name="Verhasselt P."/>
            <person name="Vierendeels F."/>
            <person name="Voet M."/>
            <person name="Volckaert G."/>
            <person name="Voss H."/>
            <person name="Wambutt R."/>
            <person name="Wedler E."/>
            <person name="Wedler H."/>
            <person name="Zimmermann F.K."/>
            <person name="Zollner A."/>
            <person name="Hani J."/>
            <person name="Hoheisel J.D."/>
        </authorList>
    </citation>
    <scope>NUCLEOTIDE SEQUENCE [LARGE SCALE GENOMIC DNA]</scope>
    <source>
        <strain>ATCC 204508 / S288c</strain>
    </source>
</reference>
<reference key="2">
    <citation type="journal article" date="2014" name="G3 (Bethesda)">
        <title>The reference genome sequence of Saccharomyces cerevisiae: Then and now.</title>
        <authorList>
            <person name="Engel S.R."/>
            <person name="Dietrich F.S."/>
            <person name="Fisk D.G."/>
            <person name="Binkley G."/>
            <person name="Balakrishnan R."/>
            <person name="Costanzo M.C."/>
            <person name="Dwight S.S."/>
            <person name="Hitz B.C."/>
            <person name="Karra K."/>
            <person name="Nash R.S."/>
            <person name="Weng S."/>
            <person name="Wong E.D."/>
            <person name="Lloyd P."/>
            <person name="Skrzypek M.S."/>
            <person name="Miyasato S.R."/>
            <person name="Simison M."/>
            <person name="Cherry J.M."/>
        </authorList>
    </citation>
    <scope>GENOME REANNOTATION</scope>
    <source>
        <strain>ATCC 204508 / S288c</strain>
    </source>
</reference>
<reference key="3">
    <citation type="journal article" date="2003" name="Genome Res.">
        <title>Systematic discovery of new genes in the Saccharomyces cerevisiae genome.</title>
        <authorList>
            <person name="Kessler M.M."/>
            <person name="Zeng Q."/>
            <person name="Hogan S."/>
            <person name="Cook R."/>
            <person name="Morales A.J."/>
            <person name="Cottarel G."/>
        </authorList>
    </citation>
    <scope>GENOME REANNOTATION</scope>
</reference>
<feature type="chain" id="PRO_0000410460" description="Uncharacterized protein YLR157C-C">
    <location>
        <begin position="1"/>
        <end position="43"/>
    </location>
</feature>
<name>YL157_YEAST</name>
<organism>
    <name type="scientific">Saccharomyces cerevisiae (strain ATCC 204508 / S288c)</name>
    <name type="common">Baker's yeast</name>
    <dbReference type="NCBI Taxonomy" id="559292"/>
    <lineage>
        <taxon>Eukaryota</taxon>
        <taxon>Fungi</taxon>
        <taxon>Dikarya</taxon>
        <taxon>Ascomycota</taxon>
        <taxon>Saccharomycotina</taxon>
        <taxon>Saccharomycetes</taxon>
        <taxon>Saccharomycetales</taxon>
        <taxon>Saccharomycetaceae</taxon>
        <taxon>Saccharomyces</taxon>
    </lineage>
</organism>
<accession>P0CY04</accession>
<accession>D6VYF2</accession>
<accession>Q3E748</accession>
<accession>Q3E759</accession>
<accession>Q3E768</accession>
<accession>Q3E812</accession>
<keyword id="KW-1185">Reference proteome</keyword>
<gene>
    <name type="ordered locus">YLR157C-C</name>
</gene>